<proteinExistence type="inferred from homology"/>
<comment type="function">
    <text evidence="1">Catalyzes the conversion of dethiobiotin (DTB) to biotin by the insertion of a sulfur atom into dethiobiotin via a radical-based mechanism.</text>
</comment>
<comment type="catalytic activity">
    <reaction evidence="1">
        <text>(4R,5S)-dethiobiotin + (sulfur carrier)-SH + 2 reduced [2Fe-2S]-[ferredoxin] + 2 S-adenosyl-L-methionine = (sulfur carrier)-H + biotin + 2 5'-deoxyadenosine + 2 L-methionine + 2 oxidized [2Fe-2S]-[ferredoxin]</text>
        <dbReference type="Rhea" id="RHEA:22060"/>
        <dbReference type="Rhea" id="RHEA-COMP:10000"/>
        <dbReference type="Rhea" id="RHEA-COMP:10001"/>
        <dbReference type="Rhea" id="RHEA-COMP:14737"/>
        <dbReference type="Rhea" id="RHEA-COMP:14739"/>
        <dbReference type="ChEBI" id="CHEBI:17319"/>
        <dbReference type="ChEBI" id="CHEBI:29917"/>
        <dbReference type="ChEBI" id="CHEBI:33737"/>
        <dbReference type="ChEBI" id="CHEBI:33738"/>
        <dbReference type="ChEBI" id="CHEBI:57586"/>
        <dbReference type="ChEBI" id="CHEBI:57844"/>
        <dbReference type="ChEBI" id="CHEBI:59789"/>
        <dbReference type="ChEBI" id="CHEBI:64428"/>
        <dbReference type="ChEBI" id="CHEBI:149473"/>
        <dbReference type="EC" id="2.8.1.6"/>
    </reaction>
</comment>
<comment type="cofactor">
    <cofactor evidence="1">
        <name>[4Fe-4S] cluster</name>
        <dbReference type="ChEBI" id="CHEBI:49883"/>
    </cofactor>
    <text evidence="1">Binds 1 [4Fe-4S] cluster. The cluster is coordinated with 3 cysteines and an exchangeable S-adenosyl-L-methionine.</text>
</comment>
<comment type="cofactor">
    <cofactor evidence="1">
        <name>[2Fe-2S] cluster</name>
        <dbReference type="ChEBI" id="CHEBI:190135"/>
    </cofactor>
    <text evidence="1">Binds 1 [2Fe-2S] cluster. The cluster is coordinated with 3 cysteines and 1 arginine.</text>
</comment>
<comment type="pathway">
    <text evidence="1">Cofactor biosynthesis; biotin biosynthesis; biotin from 7,8-diaminononanoate: step 2/2.</text>
</comment>
<comment type="subunit">
    <text evidence="1">Homodimer.</text>
</comment>
<comment type="similarity">
    <text evidence="1">Belongs to the radical SAM superfamily. Biotin synthase family.</text>
</comment>
<sequence>MAHRPRWTLSQVAELFEKPLLDLLFEAQQVHRQHFDPRQVQVSTLLSIKTGACPEDCKYCPQSSRYKTGLEAERLMEVEQVLESARKAKAAGSTRFCMGAAWKNPNERDMPYLEQMVQGVKDLGLEACMTLGTLSESQAQRLANAGLDYYNHNLDTSPEFYGNIITTRTYQERLDTLEKVRDAGIKVCSGGIVGLGETVKDRAGLLLQLANLPTPPESVPINMLVKVKGTPLADNDDVDAFDFIRTIAVARIMMPTSYVRLSAGREQMNEQTQAMCFMAGANSIFYGCKLLTTPNPEEDKDLQLFRKLGLNPQQTAVLAGDNEQQQRLEQALMTPDTDEYYNAAAL</sequence>
<keyword id="KW-0001">2Fe-2S</keyword>
<keyword id="KW-0004">4Fe-4S</keyword>
<keyword id="KW-0093">Biotin biosynthesis</keyword>
<keyword id="KW-0408">Iron</keyword>
<keyword id="KW-0411">Iron-sulfur</keyword>
<keyword id="KW-0479">Metal-binding</keyword>
<keyword id="KW-0949">S-adenosyl-L-methionine</keyword>
<keyword id="KW-0808">Transferase</keyword>
<evidence type="ECO:0000255" key="1">
    <source>
        <dbReference type="HAMAP-Rule" id="MF_01694"/>
    </source>
</evidence>
<evidence type="ECO:0000255" key="2">
    <source>
        <dbReference type="PROSITE-ProRule" id="PRU01266"/>
    </source>
</evidence>
<organism>
    <name type="scientific">Shigella boydii serotype 4 (strain Sb227)</name>
    <dbReference type="NCBI Taxonomy" id="300268"/>
    <lineage>
        <taxon>Bacteria</taxon>
        <taxon>Pseudomonadati</taxon>
        <taxon>Pseudomonadota</taxon>
        <taxon>Gammaproteobacteria</taxon>
        <taxon>Enterobacterales</taxon>
        <taxon>Enterobacteriaceae</taxon>
        <taxon>Shigella</taxon>
    </lineage>
</organism>
<feature type="chain" id="PRO_0000381632" description="Biotin synthase">
    <location>
        <begin position="1"/>
        <end position="346"/>
    </location>
</feature>
<feature type="domain" description="Radical SAM core" evidence="2">
    <location>
        <begin position="38"/>
        <end position="256"/>
    </location>
</feature>
<feature type="binding site" evidence="1">
    <location>
        <position position="53"/>
    </location>
    <ligand>
        <name>[4Fe-4S] cluster</name>
        <dbReference type="ChEBI" id="CHEBI:49883"/>
        <note>4Fe-4S-S-AdoMet</note>
    </ligand>
</feature>
<feature type="binding site" evidence="1">
    <location>
        <position position="57"/>
    </location>
    <ligand>
        <name>[4Fe-4S] cluster</name>
        <dbReference type="ChEBI" id="CHEBI:49883"/>
        <note>4Fe-4S-S-AdoMet</note>
    </ligand>
</feature>
<feature type="binding site" evidence="1">
    <location>
        <position position="60"/>
    </location>
    <ligand>
        <name>[4Fe-4S] cluster</name>
        <dbReference type="ChEBI" id="CHEBI:49883"/>
        <note>4Fe-4S-S-AdoMet</note>
    </ligand>
</feature>
<feature type="binding site" evidence="1">
    <location>
        <position position="97"/>
    </location>
    <ligand>
        <name>[2Fe-2S] cluster</name>
        <dbReference type="ChEBI" id="CHEBI:190135"/>
    </ligand>
</feature>
<feature type="binding site" evidence="1">
    <location>
        <position position="128"/>
    </location>
    <ligand>
        <name>[2Fe-2S] cluster</name>
        <dbReference type="ChEBI" id="CHEBI:190135"/>
    </ligand>
</feature>
<feature type="binding site" evidence="1">
    <location>
        <position position="188"/>
    </location>
    <ligand>
        <name>[2Fe-2S] cluster</name>
        <dbReference type="ChEBI" id="CHEBI:190135"/>
    </ligand>
</feature>
<feature type="binding site" evidence="1">
    <location>
        <position position="260"/>
    </location>
    <ligand>
        <name>[2Fe-2S] cluster</name>
        <dbReference type="ChEBI" id="CHEBI:190135"/>
    </ligand>
</feature>
<reference key="1">
    <citation type="journal article" date="2005" name="Nucleic Acids Res.">
        <title>Genome dynamics and diversity of Shigella species, the etiologic agents of bacillary dysentery.</title>
        <authorList>
            <person name="Yang F."/>
            <person name="Yang J."/>
            <person name="Zhang X."/>
            <person name="Chen L."/>
            <person name="Jiang Y."/>
            <person name="Yan Y."/>
            <person name="Tang X."/>
            <person name="Wang J."/>
            <person name="Xiong Z."/>
            <person name="Dong J."/>
            <person name="Xue Y."/>
            <person name="Zhu Y."/>
            <person name="Xu X."/>
            <person name="Sun L."/>
            <person name="Chen S."/>
            <person name="Nie H."/>
            <person name="Peng J."/>
            <person name="Xu J."/>
            <person name="Wang Y."/>
            <person name="Yuan Z."/>
            <person name="Wen Y."/>
            <person name="Yao Z."/>
            <person name="Shen Y."/>
            <person name="Qiang B."/>
            <person name="Hou Y."/>
            <person name="Yu J."/>
            <person name="Jin Q."/>
        </authorList>
    </citation>
    <scope>NUCLEOTIDE SEQUENCE [LARGE SCALE GENOMIC DNA]</scope>
    <source>
        <strain>Sb227</strain>
    </source>
</reference>
<dbReference type="EC" id="2.8.1.6" evidence="1"/>
<dbReference type="EMBL" id="CP000036">
    <property type="protein sequence ID" value="ABB65341.1"/>
    <property type="molecule type" value="Genomic_DNA"/>
</dbReference>
<dbReference type="RefSeq" id="WP_000951205.1">
    <property type="nucleotide sequence ID" value="NC_007613.1"/>
</dbReference>
<dbReference type="SMR" id="Q324B7"/>
<dbReference type="KEGG" id="sbo:SBO_0662"/>
<dbReference type="HOGENOM" id="CLU_033172_1_2_6"/>
<dbReference type="UniPathway" id="UPA00078">
    <property type="reaction ID" value="UER00162"/>
</dbReference>
<dbReference type="Proteomes" id="UP000007067">
    <property type="component" value="Chromosome"/>
</dbReference>
<dbReference type="GO" id="GO:0051537">
    <property type="term" value="F:2 iron, 2 sulfur cluster binding"/>
    <property type="evidence" value="ECO:0007669"/>
    <property type="project" value="UniProtKB-KW"/>
</dbReference>
<dbReference type="GO" id="GO:0051539">
    <property type="term" value="F:4 iron, 4 sulfur cluster binding"/>
    <property type="evidence" value="ECO:0007669"/>
    <property type="project" value="UniProtKB-KW"/>
</dbReference>
<dbReference type="GO" id="GO:0004076">
    <property type="term" value="F:biotin synthase activity"/>
    <property type="evidence" value="ECO:0007669"/>
    <property type="project" value="UniProtKB-UniRule"/>
</dbReference>
<dbReference type="GO" id="GO:0005506">
    <property type="term" value="F:iron ion binding"/>
    <property type="evidence" value="ECO:0007669"/>
    <property type="project" value="UniProtKB-UniRule"/>
</dbReference>
<dbReference type="GO" id="GO:0009102">
    <property type="term" value="P:biotin biosynthetic process"/>
    <property type="evidence" value="ECO:0007669"/>
    <property type="project" value="UniProtKB-UniRule"/>
</dbReference>
<dbReference type="CDD" id="cd01335">
    <property type="entry name" value="Radical_SAM"/>
    <property type="match status" value="1"/>
</dbReference>
<dbReference type="FunFam" id="3.20.20.70:FF:000011">
    <property type="entry name" value="Biotin synthase"/>
    <property type="match status" value="1"/>
</dbReference>
<dbReference type="Gene3D" id="3.20.20.70">
    <property type="entry name" value="Aldolase class I"/>
    <property type="match status" value="1"/>
</dbReference>
<dbReference type="HAMAP" id="MF_01694">
    <property type="entry name" value="BioB"/>
    <property type="match status" value="1"/>
</dbReference>
<dbReference type="InterPro" id="IPR013785">
    <property type="entry name" value="Aldolase_TIM"/>
</dbReference>
<dbReference type="InterPro" id="IPR010722">
    <property type="entry name" value="BATS_dom"/>
</dbReference>
<dbReference type="InterPro" id="IPR002684">
    <property type="entry name" value="Biotin_synth/BioAB"/>
</dbReference>
<dbReference type="InterPro" id="IPR024177">
    <property type="entry name" value="Biotin_synthase"/>
</dbReference>
<dbReference type="InterPro" id="IPR006638">
    <property type="entry name" value="Elp3/MiaA/NifB-like_rSAM"/>
</dbReference>
<dbReference type="InterPro" id="IPR007197">
    <property type="entry name" value="rSAM"/>
</dbReference>
<dbReference type="NCBIfam" id="TIGR00433">
    <property type="entry name" value="bioB"/>
    <property type="match status" value="1"/>
</dbReference>
<dbReference type="PANTHER" id="PTHR22976">
    <property type="entry name" value="BIOTIN SYNTHASE"/>
    <property type="match status" value="1"/>
</dbReference>
<dbReference type="PANTHER" id="PTHR22976:SF2">
    <property type="entry name" value="BIOTIN SYNTHASE, MITOCHONDRIAL"/>
    <property type="match status" value="1"/>
</dbReference>
<dbReference type="Pfam" id="PF06968">
    <property type="entry name" value="BATS"/>
    <property type="match status" value="1"/>
</dbReference>
<dbReference type="Pfam" id="PF04055">
    <property type="entry name" value="Radical_SAM"/>
    <property type="match status" value="1"/>
</dbReference>
<dbReference type="PIRSF" id="PIRSF001619">
    <property type="entry name" value="Biotin_synth"/>
    <property type="match status" value="1"/>
</dbReference>
<dbReference type="SFLD" id="SFLDF00272">
    <property type="entry name" value="biotin_synthase"/>
    <property type="match status" value="1"/>
</dbReference>
<dbReference type="SFLD" id="SFLDG01278">
    <property type="entry name" value="biotin_synthase_like"/>
    <property type="match status" value="1"/>
</dbReference>
<dbReference type="SMART" id="SM00876">
    <property type="entry name" value="BATS"/>
    <property type="match status" value="1"/>
</dbReference>
<dbReference type="SMART" id="SM00729">
    <property type="entry name" value="Elp3"/>
    <property type="match status" value="1"/>
</dbReference>
<dbReference type="SUPFAM" id="SSF102114">
    <property type="entry name" value="Radical SAM enzymes"/>
    <property type="match status" value="1"/>
</dbReference>
<dbReference type="PROSITE" id="PS51918">
    <property type="entry name" value="RADICAL_SAM"/>
    <property type="match status" value="1"/>
</dbReference>
<protein>
    <recommendedName>
        <fullName evidence="1">Biotin synthase</fullName>
        <ecNumber evidence="1">2.8.1.6</ecNumber>
    </recommendedName>
</protein>
<accession>Q324B7</accession>
<name>BIOB_SHIBS</name>
<gene>
    <name evidence="1" type="primary">bioB</name>
    <name type="ordered locus">SBO_0662</name>
</gene>